<reference key="1">
    <citation type="journal article" date="2008" name="J. Bacteriol.">
        <title>The pangenome structure of Escherichia coli: comparative genomic analysis of E. coli commensal and pathogenic isolates.</title>
        <authorList>
            <person name="Rasko D.A."/>
            <person name="Rosovitz M.J."/>
            <person name="Myers G.S.A."/>
            <person name="Mongodin E.F."/>
            <person name="Fricke W.F."/>
            <person name="Gajer P."/>
            <person name="Crabtree J."/>
            <person name="Sebaihia M."/>
            <person name="Thomson N.R."/>
            <person name="Chaudhuri R."/>
            <person name="Henderson I.R."/>
            <person name="Sperandio V."/>
            <person name="Ravel J."/>
        </authorList>
    </citation>
    <scope>NUCLEOTIDE SEQUENCE [LARGE SCALE GENOMIC DNA]</scope>
    <source>
        <strain>E24377A / ETEC</strain>
    </source>
</reference>
<proteinExistence type="inferred from homology"/>
<organism>
    <name type="scientific">Escherichia coli O139:H28 (strain E24377A / ETEC)</name>
    <dbReference type="NCBI Taxonomy" id="331111"/>
    <lineage>
        <taxon>Bacteria</taxon>
        <taxon>Pseudomonadati</taxon>
        <taxon>Pseudomonadota</taxon>
        <taxon>Gammaproteobacteria</taxon>
        <taxon>Enterobacterales</taxon>
        <taxon>Enterobacteriaceae</taxon>
        <taxon>Escherichia</taxon>
    </lineage>
</organism>
<gene>
    <name evidence="1" type="primary">grcA</name>
    <name type="ordered locus">EcE24377A_2866</name>
</gene>
<accession>A7ZQ24</accession>
<dbReference type="EMBL" id="CP000800">
    <property type="protein sequence ID" value="ABV21004.1"/>
    <property type="molecule type" value="Genomic_DNA"/>
</dbReference>
<dbReference type="RefSeq" id="WP_000627807.1">
    <property type="nucleotide sequence ID" value="NC_009801.1"/>
</dbReference>
<dbReference type="SMR" id="A7ZQ24"/>
<dbReference type="GeneID" id="93774507"/>
<dbReference type="KEGG" id="ecw:EcE24377A_2866"/>
<dbReference type="HOGENOM" id="CLU_133780_0_0_6"/>
<dbReference type="Proteomes" id="UP000001122">
    <property type="component" value="Chromosome"/>
</dbReference>
<dbReference type="GO" id="GO:0005829">
    <property type="term" value="C:cytosol"/>
    <property type="evidence" value="ECO:0007669"/>
    <property type="project" value="TreeGrafter"/>
</dbReference>
<dbReference type="GO" id="GO:0008861">
    <property type="term" value="F:formate C-acetyltransferase activity"/>
    <property type="evidence" value="ECO:0007669"/>
    <property type="project" value="TreeGrafter"/>
</dbReference>
<dbReference type="FunFam" id="3.20.70.20:FF:000002">
    <property type="entry name" value="Autonomous glycyl radical cofactor"/>
    <property type="match status" value="1"/>
</dbReference>
<dbReference type="Gene3D" id="3.20.70.20">
    <property type="match status" value="1"/>
</dbReference>
<dbReference type="HAMAP" id="MF_00806">
    <property type="entry name" value="GrcA"/>
    <property type="match status" value="1"/>
</dbReference>
<dbReference type="InterPro" id="IPR050244">
    <property type="entry name" value="Auton_GlycylRad_Cofactor"/>
</dbReference>
<dbReference type="InterPro" id="IPR019777">
    <property type="entry name" value="Form_AcTrfase_GR_CS"/>
</dbReference>
<dbReference type="InterPro" id="IPR001150">
    <property type="entry name" value="Gly_radical"/>
</dbReference>
<dbReference type="InterPro" id="IPR011140">
    <property type="entry name" value="Glycyl_radical_cofactor_GrcA"/>
</dbReference>
<dbReference type="NCBIfam" id="TIGR04365">
    <property type="entry name" value="spare_glycyl"/>
    <property type="match status" value="1"/>
</dbReference>
<dbReference type="PANTHER" id="PTHR30191">
    <property type="entry name" value="FORMATE ACETYLTRANSFERASE"/>
    <property type="match status" value="1"/>
</dbReference>
<dbReference type="PANTHER" id="PTHR30191:SF0">
    <property type="entry name" value="FORMATE ACETYLTRANSFERASE 1"/>
    <property type="match status" value="1"/>
</dbReference>
<dbReference type="Pfam" id="PF01228">
    <property type="entry name" value="Gly_radical"/>
    <property type="match status" value="1"/>
</dbReference>
<dbReference type="PIRSF" id="PIRSF000378">
    <property type="entry name" value="Gly_radicl_yfiD"/>
    <property type="match status" value="1"/>
</dbReference>
<dbReference type="SUPFAM" id="SSF51998">
    <property type="entry name" value="PFL-like glycyl radical enzymes"/>
    <property type="match status" value="1"/>
</dbReference>
<dbReference type="PROSITE" id="PS00850">
    <property type="entry name" value="GLY_RADICAL_1"/>
    <property type="match status" value="1"/>
</dbReference>
<dbReference type="PROSITE" id="PS51149">
    <property type="entry name" value="GLY_RADICAL_2"/>
    <property type="match status" value="1"/>
</dbReference>
<evidence type="ECO:0000255" key="1">
    <source>
        <dbReference type="HAMAP-Rule" id="MF_00806"/>
    </source>
</evidence>
<keyword id="KW-0007">Acetylation</keyword>
<keyword id="KW-0556">Organic radical</keyword>
<keyword id="KW-1185">Reference proteome</keyword>
<protein>
    <recommendedName>
        <fullName evidence="1">Autonomous glycyl radical cofactor</fullName>
    </recommendedName>
</protein>
<sequence>MITGIQITKAANDDLLNSFWLLDSEKGEARCIVAKAGYAEDEVVAVSKLGDIEYREVPVEVKPEVRVEGGQHLNVNVLRRETLEDAVKHPEKYPQLTIRVSGYAVRFNSLTPEQQRDVIARTFTESL</sequence>
<comment type="function">
    <text evidence="1">Acts as a radical domain for damaged PFL and possibly other radical proteins.</text>
</comment>
<feature type="chain" id="PRO_1000083716" description="Autonomous glycyl radical cofactor">
    <location>
        <begin position="1"/>
        <end position="127"/>
    </location>
</feature>
<feature type="domain" description="Glycine radical" evidence="1">
    <location>
        <begin position="5"/>
        <end position="127"/>
    </location>
</feature>
<feature type="modified residue" description="N6-acetyllysine" evidence="1">
    <location>
        <position position="48"/>
    </location>
</feature>
<feature type="modified residue" description="N6-acetyllysine" evidence="1">
    <location>
        <position position="88"/>
    </location>
</feature>
<feature type="modified residue" description="N6-acetyllysine" evidence="1">
    <location>
        <position position="92"/>
    </location>
</feature>
<feature type="modified residue" description="Glycine radical" evidence="1">
    <location>
        <position position="102"/>
    </location>
</feature>
<name>GRCA_ECO24</name>